<keyword id="KW-0053">Apoptosis</keyword>
<keyword id="KW-1035">Host cytoplasm</keyword>
<keyword id="KW-1043">Host membrane</keyword>
<keyword id="KW-1045">Host mitochondrion</keyword>
<keyword id="KW-1046">Host mitochondrion inner membrane</keyword>
<keyword id="KW-1048">Host nucleus</keyword>
<keyword id="KW-0945">Host-virus interaction</keyword>
<keyword id="KW-1090">Inhibition of host innate immune response by virus</keyword>
<keyword id="KW-1097">Inhibition of host MAVS by virus</keyword>
<keyword id="KW-1113">Inhibition of host RLR pathway by virus</keyword>
<keyword id="KW-0472">Membrane</keyword>
<keyword id="KW-1119">Modulation of host cell apoptosis by virus</keyword>
<keyword id="KW-0899">Viral immunoevasion</keyword>
<comment type="function">
    <text evidence="1">Plays an important role in promoting lung pathology in both primary viral infection and secondary bacterial infection. Promotes alteration of mitochondrial morphology, dissipation of mitochondrial membrane potential, and cell death. Alternatively, inhibits the production of interferon in the infected cell at the level of host mitochondrial antiviral signaling MAVS. Its level of expression differs greatly depending on which cell type is infected, in a manner that is independent of the levels of expression of other viral proteins. Monocytic cells are more affected than epithelial cells. Seems to disable virus-infected monocytes or other host innate immune cells. During early stage of infection, predisposes the mitochondria to permeability transition through interaction with host SLC25A6/ANT3 and VDAC1. These proteins participate in the formation of the permeability transition pore complex (PTPC) responsible of the release of mitochondrial products that triggers apoptosis.</text>
</comment>
<comment type="subunit">
    <text evidence="1">Oligomer. Interacts with human SLC25A6/ANT3 and VDAC1. Interacts with host MAVS.</text>
</comment>
<comment type="subcellular location">
    <subcellularLocation>
        <location evidence="1">Host mitochondrion inner membrane</location>
    </subcellularLocation>
    <subcellularLocation>
        <location evidence="1">Host nucleus</location>
    </subcellularLocation>
    <subcellularLocation>
        <location evidence="1">Host cytoplasm</location>
        <location evidence="1">Host cytosol</location>
    </subcellularLocation>
    <text evidence="1">Inner mitochondrial membrane in most cells types. Otherwise is detected in the nucleus and cytosol.</text>
</comment>
<comment type="miscellaneous">
    <text>Is not encoded in all strains, and seems to be dispensable for replication.</text>
</comment>
<comment type="similarity">
    <text evidence="1">Belongs to the influenza viruses PB1-F2 family.</text>
</comment>
<name>PB1F2_I45A0</name>
<sequence length="90" mass="10720">MGQEQDIPWILSTGHISTQKGENGQQTPKLEHHNSTRLMGHCQKTMNRVVMPKQIVYWKQWLSLRNPTLVFLKTHALKRWRLFSKHEWTS</sequence>
<accession>A4U6W1</accession>
<feature type="chain" id="PRO_0000373017" description="Protein PB1-F2">
    <location>
        <begin position="1"/>
        <end position="90"/>
    </location>
</feature>
<feature type="region of interest" description="Disordered" evidence="2">
    <location>
        <begin position="1"/>
        <end position="30"/>
    </location>
</feature>
<feature type="region of interest" description="Mitochondrial targeting sequence" evidence="1">
    <location>
        <begin position="65"/>
        <end position="87"/>
    </location>
</feature>
<feature type="compositionally biased region" description="Polar residues" evidence="2">
    <location>
        <begin position="14"/>
        <end position="28"/>
    </location>
</feature>
<feature type="site" description="Low pathogenicity" evidence="1">
    <location>
        <position position="66"/>
    </location>
</feature>
<organism>
    <name type="scientific">Influenza A virus (strain A/USA:Huston/AA/1945 H1N1)</name>
    <dbReference type="NCBI Taxonomy" id="425551"/>
    <lineage>
        <taxon>Viruses</taxon>
        <taxon>Riboviria</taxon>
        <taxon>Orthornavirae</taxon>
        <taxon>Negarnaviricota</taxon>
        <taxon>Polyploviricotina</taxon>
        <taxon>Insthoviricetes</taxon>
        <taxon>Articulavirales</taxon>
        <taxon>Orthomyxoviridae</taxon>
        <taxon>Alphainfluenzavirus</taxon>
        <taxon>Alphainfluenzavirus influenzae</taxon>
        <taxon>Influenza A virus</taxon>
    </lineage>
</organism>
<protein>
    <recommendedName>
        <fullName evidence="1">Protein PB1-F2</fullName>
    </recommendedName>
</protein>
<dbReference type="EMBL" id="CY021715">
    <property type="protein sequence ID" value="ABP49336.1"/>
    <property type="molecule type" value="Viral_cRNA"/>
</dbReference>
<dbReference type="SMR" id="A4U6W1"/>
<dbReference type="Proteomes" id="UP000008433">
    <property type="component" value="Genome"/>
</dbReference>
<dbReference type="GO" id="GO:0044164">
    <property type="term" value="C:host cell cytosol"/>
    <property type="evidence" value="ECO:0007669"/>
    <property type="project" value="UniProtKB-SubCell"/>
</dbReference>
<dbReference type="GO" id="GO:0044192">
    <property type="term" value="C:host cell mitochondrial inner membrane"/>
    <property type="evidence" value="ECO:0007669"/>
    <property type="project" value="UniProtKB-SubCell"/>
</dbReference>
<dbReference type="GO" id="GO:0042025">
    <property type="term" value="C:host cell nucleus"/>
    <property type="evidence" value="ECO:0007669"/>
    <property type="project" value="UniProtKB-SubCell"/>
</dbReference>
<dbReference type="GO" id="GO:0016020">
    <property type="term" value="C:membrane"/>
    <property type="evidence" value="ECO:0007669"/>
    <property type="project" value="UniProtKB-UniRule"/>
</dbReference>
<dbReference type="GO" id="GO:0052150">
    <property type="term" value="P:symbiont-mediated perturbation of host apoptosis"/>
    <property type="evidence" value="ECO:0007669"/>
    <property type="project" value="UniProtKB-KW"/>
</dbReference>
<dbReference type="GO" id="GO:0039545">
    <property type="term" value="P:symbiont-mediated suppression of host cytoplasmic pattern recognition receptor signaling pathway via inhibition of MAVS activity"/>
    <property type="evidence" value="ECO:0000250"/>
    <property type="project" value="UniProtKB"/>
</dbReference>
<dbReference type="HAMAP" id="MF_04064">
    <property type="entry name" value="INFV_PB1F2"/>
    <property type="match status" value="1"/>
</dbReference>
<dbReference type="InterPro" id="IPR021045">
    <property type="entry name" value="Flu_proapoptotic_PB1-F2"/>
</dbReference>
<dbReference type="Pfam" id="PF11986">
    <property type="entry name" value="PB1-F2"/>
    <property type="match status" value="1"/>
</dbReference>
<proteinExistence type="inferred from homology"/>
<evidence type="ECO:0000255" key="1">
    <source>
        <dbReference type="HAMAP-Rule" id="MF_04064"/>
    </source>
</evidence>
<evidence type="ECO:0000256" key="2">
    <source>
        <dbReference type="SAM" id="MobiDB-lite"/>
    </source>
</evidence>
<gene>
    <name evidence="1" type="primary">PB1</name>
    <name type="synonym">PB1-F2</name>
</gene>
<organismHost>
    <name type="scientific">Aves</name>
    <dbReference type="NCBI Taxonomy" id="8782"/>
</organismHost>
<organismHost>
    <name type="scientific">Homo sapiens</name>
    <name type="common">Human</name>
    <dbReference type="NCBI Taxonomy" id="9606"/>
</organismHost>
<organismHost>
    <name type="scientific">Sus scrofa</name>
    <name type="common">Pig</name>
    <dbReference type="NCBI Taxonomy" id="9823"/>
</organismHost>
<reference key="1">
    <citation type="submission" date="2007-04" db="EMBL/GenBank/DDBJ databases">
        <title>The NIAID influenza genome sequencing project.</title>
        <authorList>
            <person name="Ghedin E."/>
            <person name="Spiro D."/>
            <person name="Miller N."/>
            <person name="Zaborsky J."/>
            <person name="Feldblyum T."/>
            <person name="Subbu V."/>
            <person name="Shumway M."/>
            <person name="Sparenborg J."/>
            <person name="Groveman L."/>
            <person name="Halpin R."/>
            <person name="Sitz J."/>
            <person name="Koo H."/>
            <person name="Salzberg S.L."/>
            <person name="Webster R.G."/>
            <person name="Hoffmann E."/>
            <person name="Krauss S."/>
            <person name="Naeve C."/>
            <person name="Bao Y."/>
            <person name="Bolotov P."/>
            <person name="Dernovoy D."/>
            <person name="Kiryutin B."/>
            <person name="Lipman D.J."/>
            <person name="Tatusova T."/>
        </authorList>
    </citation>
    <scope>NUCLEOTIDE SEQUENCE [GENOMIC RNA]</scope>
</reference>
<reference key="2">
    <citation type="submission" date="2007-04" db="EMBL/GenBank/DDBJ databases">
        <authorList>
            <consortium name="The NIAID Influenza Genome Sequencing Consortium"/>
        </authorList>
    </citation>
    <scope>NUCLEOTIDE SEQUENCE [GENOMIC RNA]</scope>
</reference>